<reference key="1">
    <citation type="submission" date="2007-12" db="EMBL/GenBank/DDBJ databases">
        <title>Brucella suis ATCC 23445 whole genome shotgun sequencing project.</title>
        <authorList>
            <person name="Setubal J.C."/>
            <person name="Bowns C."/>
            <person name="Boyle S."/>
            <person name="Crasta O.R."/>
            <person name="Czar M.J."/>
            <person name="Dharmanolla C."/>
            <person name="Gillespie J.J."/>
            <person name="Kenyon R.W."/>
            <person name="Lu J."/>
            <person name="Mane S."/>
            <person name="Mohapatra S."/>
            <person name="Nagrani S."/>
            <person name="Purkayastha A."/>
            <person name="Rajasimha H.K."/>
            <person name="Shallom J.M."/>
            <person name="Shallom S."/>
            <person name="Shukla M."/>
            <person name="Snyder E.E."/>
            <person name="Sobral B.W."/>
            <person name="Wattam A.R."/>
            <person name="Will R."/>
            <person name="Williams K."/>
            <person name="Yoo H."/>
            <person name="Bruce D."/>
            <person name="Detter C."/>
            <person name="Munk C."/>
            <person name="Brettin T.S."/>
        </authorList>
    </citation>
    <scope>NUCLEOTIDE SEQUENCE [LARGE SCALE GENOMIC DNA]</scope>
    <source>
        <strain>ATCC 23445 / NCTC 10510</strain>
    </source>
</reference>
<proteinExistence type="inferred from homology"/>
<dbReference type="EC" id="1.2.1.38" evidence="1"/>
<dbReference type="EMBL" id="CP000911">
    <property type="protein sequence ID" value="ABY37895.1"/>
    <property type="molecule type" value="Genomic_DNA"/>
</dbReference>
<dbReference type="RefSeq" id="WP_006072543.1">
    <property type="nucleotide sequence ID" value="NC_010169.1"/>
</dbReference>
<dbReference type="SMR" id="B0CLB5"/>
<dbReference type="KEGG" id="bmt:BSUIS_A0825"/>
<dbReference type="HOGENOM" id="CLU_077118_0_0_5"/>
<dbReference type="UniPathway" id="UPA00068">
    <property type="reaction ID" value="UER00108"/>
</dbReference>
<dbReference type="Proteomes" id="UP000008545">
    <property type="component" value="Chromosome I"/>
</dbReference>
<dbReference type="GO" id="GO:0005737">
    <property type="term" value="C:cytoplasm"/>
    <property type="evidence" value="ECO:0007669"/>
    <property type="project" value="UniProtKB-SubCell"/>
</dbReference>
<dbReference type="GO" id="GO:0003942">
    <property type="term" value="F:N-acetyl-gamma-glutamyl-phosphate reductase activity"/>
    <property type="evidence" value="ECO:0007669"/>
    <property type="project" value="UniProtKB-UniRule"/>
</dbReference>
<dbReference type="GO" id="GO:0051287">
    <property type="term" value="F:NAD binding"/>
    <property type="evidence" value="ECO:0007669"/>
    <property type="project" value="InterPro"/>
</dbReference>
<dbReference type="GO" id="GO:0006526">
    <property type="term" value="P:L-arginine biosynthetic process"/>
    <property type="evidence" value="ECO:0007669"/>
    <property type="project" value="UniProtKB-UniRule"/>
</dbReference>
<dbReference type="CDD" id="cd23935">
    <property type="entry name" value="AGPR_2_C"/>
    <property type="match status" value="1"/>
</dbReference>
<dbReference type="CDD" id="cd17896">
    <property type="entry name" value="AGPR_2_N"/>
    <property type="match status" value="1"/>
</dbReference>
<dbReference type="Gene3D" id="3.30.360.10">
    <property type="entry name" value="Dihydrodipicolinate Reductase, domain 2"/>
    <property type="match status" value="1"/>
</dbReference>
<dbReference type="Gene3D" id="3.40.50.720">
    <property type="entry name" value="NAD(P)-binding Rossmann-like Domain"/>
    <property type="match status" value="1"/>
</dbReference>
<dbReference type="HAMAP" id="MF_01110">
    <property type="entry name" value="ArgC_type2"/>
    <property type="match status" value="1"/>
</dbReference>
<dbReference type="InterPro" id="IPR023013">
    <property type="entry name" value="AGPR_AS"/>
</dbReference>
<dbReference type="InterPro" id="IPR010136">
    <property type="entry name" value="AGPR_type-2"/>
</dbReference>
<dbReference type="InterPro" id="IPR036291">
    <property type="entry name" value="NAD(P)-bd_dom_sf"/>
</dbReference>
<dbReference type="InterPro" id="IPR050085">
    <property type="entry name" value="NAGSA_dehydrogenase"/>
</dbReference>
<dbReference type="InterPro" id="IPR000534">
    <property type="entry name" value="Semialdehyde_DH_NAD-bd"/>
</dbReference>
<dbReference type="NCBIfam" id="TIGR01851">
    <property type="entry name" value="argC_other"/>
    <property type="match status" value="1"/>
</dbReference>
<dbReference type="PANTHER" id="PTHR32338:SF10">
    <property type="entry name" value="N-ACETYL-GAMMA-GLUTAMYL-PHOSPHATE REDUCTASE, CHLOROPLASTIC-RELATED"/>
    <property type="match status" value="1"/>
</dbReference>
<dbReference type="PANTHER" id="PTHR32338">
    <property type="entry name" value="N-ACETYL-GAMMA-GLUTAMYL-PHOSPHATE REDUCTASE, CHLOROPLASTIC-RELATED-RELATED"/>
    <property type="match status" value="1"/>
</dbReference>
<dbReference type="Pfam" id="PF01118">
    <property type="entry name" value="Semialdhyde_dh"/>
    <property type="match status" value="1"/>
</dbReference>
<dbReference type="Pfam" id="PF22698">
    <property type="entry name" value="Semialdhyde_dhC_1"/>
    <property type="match status" value="1"/>
</dbReference>
<dbReference type="SMART" id="SM00859">
    <property type="entry name" value="Semialdhyde_dh"/>
    <property type="match status" value="1"/>
</dbReference>
<dbReference type="SUPFAM" id="SSF55347">
    <property type="entry name" value="Glyceraldehyde-3-phosphate dehydrogenase-like, C-terminal domain"/>
    <property type="match status" value="1"/>
</dbReference>
<dbReference type="SUPFAM" id="SSF51735">
    <property type="entry name" value="NAD(P)-binding Rossmann-fold domains"/>
    <property type="match status" value="1"/>
</dbReference>
<dbReference type="PROSITE" id="PS01224">
    <property type="entry name" value="ARGC"/>
    <property type="match status" value="1"/>
</dbReference>
<feature type="chain" id="PRO_1000084869" description="N-acetyl-gamma-glutamyl-phosphate reductase">
    <location>
        <begin position="1"/>
        <end position="310"/>
    </location>
</feature>
<feature type="active site" evidence="1">
    <location>
        <position position="117"/>
    </location>
</feature>
<comment type="function">
    <text evidence="1">Catalyzes the NADPH-dependent reduction of N-acetyl-5-glutamyl phosphate to yield N-acetyl-L-glutamate 5-semialdehyde.</text>
</comment>
<comment type="catalytic activity">
    <reaction evidence="1">
        <text>N-acetyl-L-glutamate 5-semialdehyde + phosphate + NADP(+) = N-acetyl-L-glutamyl 5-phosphate + NADPH + H(+)</text>
        <dbReference type="Rhea" id="RHEA:21588"/>
        <dbReference type="ChEBI" id="CHEBI:15378"/>
        <dbReference type="ChEBI" id="CHEBI:29123"/>
        <dbReference type="ChEBI" id="CHEBI:43474"/>
        <dbReference type="ChEBI" id="CHEBI:57783"/>
        <dbReference type="ChEBI" id="CHEBI:57936"/>
        <dbReference type="ChEBI" id="CHEBI:58349"/>
        <dbReference type="EC" id="1.2.1.38"/>
    </reaction>
</comment>
<comment type="pathway">
    <text evidence="1">Amino-acid biosynthesis; L-arginine biosynthesis; N(2)-acetyl-L-ornithine from L-glutamate: step 3/4.</text>
</comment>
<comment type="subcellular location">
    <subcellularLocation>
        <location evidence="1">Cytoplasm</location>
    </subcellularLocation>
</comment>
<comment type="similarity">
    <text evidence="1">Belongs to the NAGSA dehydrogenase family. Type 2 subfamily.</text>
</comment>
<accession>B0CLB5</accession>
<keyword id="KW-0028">Amino-acid biosynthesis</keyword>
<keyword id="KW-0055">Arginine biosynthesis</keyword>
<keyword id="KW-0963">Cytoplasm</keyword>
<keyword id="KW-0521">NADP</keyword>
<keyword id="KW-0560">Oxidoreductase</keyword>
<organism>
    <name type="scientific">Brucella suis (strain ATCC 23445 / NCTC 10510)</name>
    <dbReference type="NCBI Taxonomy" id="470137"/>
    <lineage>
        <taxon>Bacteria</taxon>
        <taxon>Pseudomonadati</taxon>
        <taxon>Pseudomonadota</taxon>
        <taxon>Alphaproteobacteria</taxon>
        <taxon>Hyphomicrobiales</taxon>
        <taxon>Brucellaceae</taxon>
        <taxon>Brucella/Ochrobactrum group</taxon>
        <taxon>Brucella</taxon>
    </lineage>
</organism>
<evidence type="ECO:0000255" key="1">
    <source>
        <dbReference type="HAMAP-Rule" id="MF_01110"/>
    </source>
</evidence>
<name>ARGC_BRUSI</name>
<sequence>MKPKIFIDGEHGTTGLQIRTRLAERDDLEVISIPEAERRNKDLRADYLRAADIAILCLPDDASKEAVSLLEGHNSTRIIDTSTAHRVHPDWAYGFAELTKGQRERIAEARLVANPGCYPTGAIALVRPLRDAGLLPADYPVSVNAVSGYTGGGKQLIAQMEDRNHPDYLAANNFLYGLPLKHKHVPELQLHGRLDRRPIFSPSVGRFPQGMIVQVPLFLSELEGSPSLAKVHAVLTEHYAGQDIVDVVPLEESAKLPRVDAEELAGKDGMKLFVFGTEDHGQVNLVALLDNLGKGASGAAVQNMNLMLGK</sequence>
<gene>
    <name evidence="1" type="primary">argC</name>
    <name type="ordered locus">BSUIS_A0825</name>
</gene>
<protein>
    <recommendedName>
        <fullName evidence="1">N-acetyl-gamma-glutamyl-phosphate reductase</fullName>
        <shortName evidence="1">AGPR</shortName>
        <ecNumber evidence="1">1.2.1.38</ecNumber>
    </recommendedName>
    <alternativeName>
        <fullName evidence="1">N-acetyl-glutamate semialdehyde dehydrogenase</fullName>
        <shortName evidence="1">NAGSA dehydrogenase</shortName>
    </alternativeName>
</protein>